<name>ZN331_CANLF</name>
<dbReference type="EMBL" id="AY375188">
    <property type="protein sequence ID" value="AAR21107.1"/>
    <property type="molecule type" value="mRNA"/>
</dbReference>
<dbReference type="RefSeq" id="NP_001003331.1">
    <property type="nucleotide sequence ID" value="NM_001003331.2"/>
</dbReference>
<dbReference type="SMR" id="Q6JLC9"/>
<dbReference type="STRING" id="9615.ENSCAFP00000040347"/>
<dbReference type="PaxDb" id="9612-ENSCAFP00000040347"/>
<dbReference type="GeneID" id="414288"/>
<dbReference type="KEGG" id="cfa:414288"/>
<dbReference type="CTD" id="55422"/>
<dbReference type="eggNOG" id="KOG1721">
    <property type="taxonomic scope" value="Eukaryota"/>
</dbReference>
<dbReference type="InParanoid" id="Q6JLC9"/>
<dbReference type="OrthoDB" id="6591996at2759"/>
<dbReference type="Proteomes" id="UP000002254">
    <property type="component" value="Unplaced"/>
</dbReference>
<dbReference type="Proteomes" id="UP000694429">
    <property type="component" value="Unplaced"/>
</dbReference>
<dbReference type="Proteomes" id="UP000694542">
    <property type="component" value="Unplaced"/>
</dbReference>
<dbReference type="Proteomes" id="UP000805418">
    <property type="component" value="Unplaced"/>
</dbReference>
<dbReference type="GO" id="GO:0005634">
    <property type="term" value="C:nucleus"/>
    <property type="evidence" value="ECO:0000318"/>
    <property type="project" value="GO_Central"/>
</dbReference>
<dbReference type="GO" id="GO:0000981">
    <property type="term" value="F:DNA-binding transcription factor activity, RNA polymerase II-specific"/>
    <property type="evidence" value="ECO:0000318"/>
    <property type="project" value="GO_Central"/>
</dbReference>
<dbReference type="GO" id="GO:0000977">
    <property type="term" value="F:RNA polymerase II transcription regulatory region sequence-specific DNA binding"/>
    <property type="evidence" value="ECO:0000318"/>
    <property type="project" value="GO_Central"/>
</dbReference>
<dbReference type="GO" id="GO:0008270">
    <property type="term" value="F:zinc ion binding"/>
    <property type="evidence" value="ECO:0007669"/>
    <property type="project" value="UniProtKB-KW"/>
</dbReference>
<dbReference type="GO" id="GO:0006357">
    <property type="term" value="P:regulation of transcription by RNA polymerase II"/>
    <property type="evidence" value="ECO:0000318"/>
    <property type="project" value="GO_Central"/>
</dbReference>
<dbReference type="CDD" id="cd07765">
    <property type="entry name" value="KRAB_A-box"/>
    <property type="match status" value="1"/>
</dbReference>
<dbReference type="FunFam" id="3.30.160.60:FF:000020">
    <property type="entry name" value="Zinc finger protein 14 homolog"/>
    <property type="match status" value="3"/>
</dbReference>
<dbReference type="FunFam" id="3.30.160.60:FF:001425">
    <property type="entry name" value="Zinc finger protein 331"/>
    <property type="match status" value="1"/>
</dbReference>
<dbReference type="FunFam" id="3.30.160.60:FF:002343">
    <property type="entry name" value="Zinc finger protein 33A"/>
    <property type="match status" value="1"/>
</dbReference>
<dbReference type="FunFam" id="3.30.160.60:FF:000044">
    <property type="entry name" value="zinc finger protein 37 homolog"/>
    <property type="match status" value="1"/>
</dbReference>
<dbReference type="FunFam" id="3.30.160.60:FF:000338">
    <property type="entry name" value="zinc finger protein 383"/>
    <property type="match status" value="1"/>
</dbReference>
<dbReference type="FunFam" id="3.30.160.60:FF:001498">
    <property type="entry name" value="Zinc finger protein 404"/>
    <property type="match status" value="1"/>
</dbReference>
<dbReference type="FunFam" id="3.30.160.60:FF:002254">
    <property type="entry name" value="Zinc finger protein 540"/>
    <property type="match status" value="3"/>
</dbReference>
<dbReference type="FunFam" id="3.30.160.60:FF:000737">
    <property type="entry name" value="Zinc finger protein 565"/>
    <property type="match status" value="1"/>
</dbReference>
<dbReference type="Gene3D" id="6.10.140.140">
    <property type="match status" value="1"/>
</dbReference>
<dbReference type="Gene3D" id="3.30.160.60">
    <property type="entry name" value="Classic Zinc Finger"/>
    <property type="match status" value="12"/>
</dbReference>
<dbReference type="InterPro" id="IPR001909">
    <property type="entry name" value="KRAB"/>
</dbReference>
<dbReference type="InterPro" id="IPR036051">
    <property type="entry name" value="KRAB_dom_sf"/>
</dbReference>
<dbReference type="InterPro" id="IPR036236">
    <property type="entry name" value="Znf_C2H2_sf"/>
</dbReference>
<dbReference type="InterPro" id="IPR013087">
    <property type="entry name" value="Znf_C2H2_type"/>
</dbReference>
<dbReference type="PANTHER" id="PTHR24381">
    <property type="entry name" value="ZINC FINGER PROTEIN"/>
    <property type="match status" value="1"/>
</dbReference>
<dbReference type="PANTHER" id="PTHR24381:SF458">
    <property type="entry name" value="ZINC FINGER PROTEIN 585B"/>
    <property type="match status" value="1"/>
</dbReference>
<dbReference type="Pfam" id="PF01352">
    <property type="entry name" value="KRAB"/>
    <property type="match status" value="1"/>
</dbReference>
<dbReference type="Pfam" id="PF00096">
    <property type="entry name" value="zf-C2H2"/>
    <property type="match status" value="9"/>
</dbReference>
<dbReference type="Pfam" id="PF13912">
    <property type="entry name" value="zf-C2H2_6"/>
    <property type="match status" value="1"/>
</dbReference>
<dbReference type="SMART" id="SM00349">
    <property type="entry name" value="KRAB"/>
    <property type="match status" value="1"/>
</dbReference>
<dbReference type="SMART" id="SM00355">
    <property type="entry name" value="ZnF_C2H2"/>
    <property type="match status" value="12"/>
</dbReference>
<dbReference type="SUPFAM" id="SSF57667">
    <property type="entry name" value="beta-beta-alpha zinc fingers"/>
    <property type="match status" value="7"/>
</dbReference>
<dbReference type="SUPFAM" id="SSF109640">
    <property type="entry name" value="KRAB domain (Kruppel-associated box)"/>
    <property type="match status" value="1"/>
</dbReference>
<dbReference type="PROSITE" id="PS50805">
    <property type="entry name" value="KRAB"/>
    <property type="match status" value="1"/>
</dbReference>
<dbReference type="PROSITE" id="PS00028">
    <property type="entry name" value="ZINC_FINGER_C2H2_1"/>
    <property type="match status" value="12"/>
</dbReference>
<dbReference type="PROSITE" id="PS50157">
    <property type="entry name" value="ZINC_FINGER_C2H2_2"/>
    <property type="match status" value="12"/>
</dbReference>
<sequence>MAHGLVTFSDVAIDFSQEEWACLDSRQRDLYWDVMLENYSNLVSLDLESPYGTKSLPTEKGIYEINLSKWNSNGKSKSLGLDWMCEGEFEGPQGPRESCFNQMIINYEKTPTCRENTSVRPHQRLHTRENSYECKECGKAFSRGYQLTQHQKIHTGEKPYECKECKKAFRWGNQLTQHQKIHTGEKPYECKDCGKAFRWGSSLVIHKRIHTGEKPYECKDCEKAFRRGDELTQHQRFHTGEKDYECKDCGKTFSRVYKLIQHKRIHSGEKPYECKDCGKAFICGSSLVQHKRIHTGEKPYECQECGKAFTRVNYLTQHQKIHTGEKPHECKECGKAFRWGSSLVKHERIHTGEKPYKCTECGKAFNCGYHLTQHERIHTGETPYKCKECGKAFIYGSSLVKHERIHTGEKPYECKECGKAFSHGHQLTQHQKIHTGEKSFECKECGKACNHVNHLREHQRVHTAEKPFEQKEGAEASIQHSFLPQHKENP</sequence>
<reference key="1">
    <citation type="journal article" date="2004" name="Anim. Genet.">
        <title>Molecular characterization and mapping of the canine KRAB zinc finger gene ZNF331.</title>
        <authorList>
            <person name="Meiboom M."/>
            <person name="Murua Escobar H."/>
            <person name="Winkler S."/>
            <person name="Nolte I."/>
            <person name="Bullerdiek J."/>
        </authorList>
    </citation>
    <scope>NUCLEOTIDE SEQUENCE [MRNA]</scope>
    <source>
        <tissue>Testis</tissue>
    </source>
</reference>
<comment type="function">
    <text evidence="1">May be involved in transcriptional regulation. May play a role in spermatogenesis (By similarity).</text>
</comment>
<comment type="subcellular location">
    <subcellularLocation>
        <location evidence="6">Nucleus</location>
    </subcellularLocation>
</comment>
<comment type="similarity">
    <text evidence="6">Belongs to the krueppel C2H2-type zinc-finger protein family.</text>
</comment>
<protein>
    <recommendedName>
        <fullName>Zinc finger protein 331</fullName>
    </recommendedName>
</protein>
<evidence type="ECO:0000250" key="1"/>
<evidence type="ECO:0000250" key="2">
    <source>
        <dbReference type="UniProtKB" id="Q9NQX6"/>
    </source>
</evidence>
<evidence type="ECO:0000255" key="3">
    <source>
        <dbReference type="PROSITE-ProRule" id="PRU00042"/>
    </source>
</evidence>
<evidence type="ECO:0000255" key="4">
    <source>
        <dbReference type="PROSITE-ProRule" id="PRU00119"/>
    </source>
</evidence>
<evidence type="ECO:0000256" key="5">
    <source>
        <dbReference type="SAM" id="MobiDB-lite"/>
    </source>
</evidence>
<evidence type="ECO:0000305" key="6"/>
<accession>Q6JLC9</accession>
<organism>
    <name type="scientific">Canis lupus familiaris</name>
    <name type="common">Dog</name>
    <name type="synonym">Canis familiaris</name>
    <dbReference type="NCBI Taxonomy" id="9615"/>
    <lineage>
        <taxon>Eukaryota</taxon>
        <taxon>Metazoa</taxon>
        <taxon>Chordata</taxon>
        <taxon>Craniata</taxon>
        <taxon>Vertebrata</taxon>
        <taxon>Euteleostomi</taxon>
        <taxon>Mammalia</taxon>
        <taxon>Eutheria</taxon>
        <taxon>Laurasiatheria</taxon>
        <taxon>Carnivora</taxon>
        <taxon>Caniformia</taxon>
        <taxon>Canidae</taxon>
        <taxon>Canis</taxon>
    </lineage>
</organism>
<gene>
    <name type="primary">ZNF331</name>
</gene>
<proteinExistence type="evidence at transcript level"/>
<feature type="chain" id="PRO_0000047534" description="Zinc finger protein 331">
    <location>
        <begin position="1"/>
        <end position="490"/>
    </location>
</feature>
<feature type="domain" description="KRAB" evidence="4">
    <location>
        <begin position="6"/>
        <end position="78"/>
    </location>
</feature>
<feature type="zinc finger region" description="C2H2-type 1" evidence="3">
    <location>
        <begin position="132"/>
        <end position="154"/>
    </location>
</feature>
<feature type="zinc finger region" description="C2H2-type 2" evidence="3">
    <location>
        <begin position="160"/>
        <end position="182"/>
    </location>
</feature>
<feature type="zinc finger region" description="C2H2-type 3" evidence="3">
    <location>
        <begin position="188"/>
        <end position="210"/>
    </location>
</feature>
<feature type="zinc finger region" description="C2H2-type 4" evidence="3">
    <location>
        <begin position="216"/>
        <end position="238"/>
    </location>
</feature>
<feature type="zinc finger region" description="C2H2-type 5" evidence="3">
    <location>
        <begin position="244"/>
        <end position="266"/>
    </location>
</feature>
<feature type="zinc finger region" description="C2H2-type 6" evidence="3">
    <location>
        <begin position="272"/>
        <end position="294"/>
    </location>
</feature>
<feature type="zinc finger region" description="C2H2-type 7" evidence="3">
    <location>
        <begin position="300"/>
        <end position="322"/>
    </location>
</feature>
<feature type="zinc finger region" description="C2H2-type 8" evidence="3">
    <location>
        <begin position="328"/>
        <end position="350"/>
    </location>
</feature>
<feature type="zinc finger region" description="C2H2-type 9" evidence="3">
    <location>
        <begin position="356"/>
        <end position="378"/>
    </location>
</feature>
<feature type="zinc finger region" description="C2H2-type 10" evidence="3">
    <location>
        <begin position="384"/>
        <end position="406"/>
    </location>
</feature>
<feature type="zinc finger region" description="C2H2-type 11" evidence="3">
    <location>
        <begin position="412"/>
        <end position="434"/>
    </location>
</feature>
<feature type="zinc finger region" description="C2H2-type 12" evidence="3">
    <location>
        <begin position="440"/>
        <end position="462"/>
    </location>
</feature>
<feature type="region of interest" description="Disordered" evidence="5">
    <location>
        <begin position="470"/>
        <end position="490"/>
    </location>
</feature>
<feature type="cross-link" description="Glycyl lysine isopeptide (Lys-Gly) (interchain with G-Cter in SUMO2)" evidence="2">
    <location>
        <position position="109"/>
    </location>
</feature>
<feature type="cross-link" description="Glycyl lysine isopeptide (Lys-Gly) (interchain with G-Cter in SUMO2)" evidence="2">
    <location>
        <position position="401"/>
    </location>
</feature>
<keyword id="KW-0238">DNA-binding</keyword>
<keyword id="KW-1017">Isopeptide bond</keyword>
<keyword id="KW-0479">Metal-binding</keyword>
<keyword id="KW-0539">Nucleus</keyword>
<keyword id="KW-1185">Reference proteome</keyword>
<keyword id="KW-0677">Repeat</keyword>
<keyword id="KW-0804">Transcription</keyword>
<keyword id="KW-0805">Transcription regulation</keyword>
<keyword id="KW-0832">Ubl conjugation</keyword>
<keyword id="KW-0862">Zinc</keyword>
<keyword id="KW-0863">Zinc-finger</keyword>